<protein>
    <recommendedName>
        <fullName evidence="1">UPF0102 protein Ccon26_01140</fullName>
    </recommendedName>
</protein>
<organism>
    <name type="scientific">Campylobacter concisus (strain 13826)</name>
    <dbReference type="NCBI Taxonomy" id="360104"/>
    <lineage>
        <taxon>Bacteria</taxon>
        <taxon>Pseudomonadati</taxon>
        <taxon>Campylobacterota</taxon>
        <taxon>Epsilonproteobacteria</taxon>
        <taxon>Campylobacterales</taxon>
        <taxon>Campylobacteraceae</taxon>
        <taxon>Campylobacter</taxon>
    </lineage>
</organism>
<proteinExistence type="inferred from homology"/>
<name>Y114_CAMC1</name>
<comment type="similarity">
    <text evidence="1">Belongs to the UPF0102 family.</text>
</comment>
<accession>A7ZB75</accession>
<sequence>MGLKEYLFGKSSEDRACEFLRKLGFVILERNFHSKFGEIDIIALSSDKILHFIEVKATSGGYEAEYRLNKAKYMKILKTINFYMMKNEPNRDYQLDLLVVKNENFELIENISL</sequence>
<reference key="1">
    <citation type="submission" date="2007-10" db="EMBL/GenBank/DDBJ databases">
        <title>Genome sequence of Campylobacter concisus 13826 isolated from human feces.</title>
        <authorList>
            <person name="Fouts D.E."/>
            <person name="Mongodin E.F."/>
            <person name="Puiu D."/>
            <person name="Sebastian Y."/>
            <person name="Miller W.G."/>
            <person name="Mandrell R.E."/>
            <person name="On S."/>
            <person name="Nelson K.E."/>
        </authorList>
    </citation>
    <scope>NUCLEOTIDE SEQUENCE [LARGE SCALE GENOMIC DNA]</scope>
    <source>
        <strain>13826</strain>
    </source>
</reference>
<evidence type="ECO:0000255" key="1">
    <source>
        <dbReference type="HAMAP-Rule" id="MF_00048"/>
    </source>
</evidence>
<dbReference type="EMBL" id="CP000792">
    <property type="protein sequence ID" value="EAT98522.1"/>
    <property type="molecule type" value="Genomic_DNA"/>
</dbReference>
<dbReference type="RefSeq" id="WP_004317970.1">
    <property type="nucleotide sequence ID" value="NC_009802.2"/>
</dbReference>
<dbReference type="SMR" id="A7ZB75"/>
<dbReference type="STRING" id="360104.CCC13826_1143"/>
<dbReference type="KEGG" id="cco:CCC13826_1143"/>
<dbReference type="eggNOG" id="COG0792">
    <property type="taxonomic scope" value="Bacteria"/>
</dbReference>
<dbReference type="HOGENOM" id="CLU_115353_3_2_7"/>
<dbReference type="OrthoDB" id="9794876at2"/>
<dbReference type="Proteomes" id="UP000001121">
    <property type="component" value="Chromosome"/>
</dbReference>
<dbReference type="GO" id="GO:0003676">
    <property type="term" value="F:nucleic acid binding"/>
    <property type="evidence" value="ECO:0007669"/>
    <property type="project" value="InterPro"/>
</dbReference>
<dbReference type="Gene3D" id="3.40.1350.10">
    <property type="match status" value="1"/>
</dbReference>
<dbReference type="HAMAP" id="MF_00048">
    <property type="entry name" value="UPF0102"/>
    <property type="match status" value="1"/>
</dbReference>
<dbReference type="InterPro" id="IPR011335">
    <property type="entry name" value="Restrct_endonuc-II-like"/>
</dbReference>
<dbReference type="InterPro" id="IPR011856">
    <property type="entry name" value="tRNA_endonuc-like_dom_sf"/>
</dbReference>
<dbReference type="InterPro" id="IPR003509">
    <property type="entry name" value="UPF0102_YraN-like"/>
</dbReference>
<dbReference type="NCBIfam" id="NF009152">
    <property type="entry name" value="PRK12497.2-4"/>
    <property type="match status" value="1"/>
</dbReference>
<dbReference type="PANTHER" id="PTHR34039">
    <property type="entry name" value="UPF0102 PROTEIN YRAN"/>
    <property type="match status" value="1"/>
</dbReference>
<dbReference type="PANTHER" id="PTHR34039:SF1">
    <property type="entry name" value="UPF0102 PROTEIN YRAN"/>
    <property type="match status" value="1"/>
</dbReference>
<dbReference type="Pfam" id="PF02021">
    <property type="entry name" value="UPF0102"/>
    <property type="match status" value="1"/>
</dbReference>
<dbReference type="SUPFAM" id="SSF52980">
    <property type="entry name" value="Restriction endonuclease-like"/>
    <property type="match status" value="1"/>
</dbReference>
<feature type="chain" id="PRO_1000009194" description="UPF0102 protein Ccon26_01140">
    <location>
        <begin position="1"/>
        <end position="113"/>
    </location>
</feature>
<gene>
    <name type="ordered locus">Ccon26_01140</name>
    <name type="ORF">CCC13826_1143</name>
</gene>